<sequence length="1291" mass="149261">MTEKITLADALSNVEVLDELSLPDEQPCIEAQPCSIIYKANFDTNFEDRNGFVTGIAKYIEEATTHANLNVLLDEGQKHAVMLYTWRCCSRAIPQPKSNEQPNRVEIYEKTVEVLAPEVNKLLNFMYFQRKAIEAFSGEVKRLCHAEKRKDFVSEAYLLTLGKFINMFAVLDELKNMKSSVKNDYSTYRRAAQFLKVMSDSHTLQESQNLSMFLATQNKIRDTVKDTLEKIVGYEDLLSDVVNICVHMFETKMYLTPEEKHMLVKVMGFGLFLMDSDACNINKLDQKKKIRLDRIDRIFKNLEVVPLFGDMQIAPFNYIKRSKHFDSSKWPLSSSNAISPQADLMVHLPQIREDHVKYISELARYTNEVTTTVKENPSDAENRITADLALRGLQLLSEWTSVVTELYSWKLLHPTDHHQNKECPVEAEEYERATRYNYTSEEKFALIEVIAMIKGLQVLMARIETVLCEAIRRNIYSELQDFVQLSLREPLRKAVKNKKDLIRSIIMSVRETSADWQKGYEPTDDPVAKGKKDPDGGFRIQVPRLNVGPSSTQLYMVRTMLESLIADKSGGKRTLRKDIDGNCLLQIDTFHKTSFYWSYLLNFSDTLQKCCDLSQLWYREFYLEMTMGRKVNKCLVRHQHNEECKDLITMEKRIQFPIEMSMPWILTDHILQTKEPSMMEFVLYPLDLYNDSAYYALTVFRKQFLYDEVEAEVNLCFDQFVYKLSEQIFAHYKQLAGSIFLDKRFRLECEVLGFNFQSYPRNNRYETLLKQRHVQLLGRSIDLNKLITQRINANMHKSIELAISRFEGNDITGIVELEGLLEANRICHKLLSKYLALDNFDGMVKEANHNVLAPYGRITLHVFVELNYDFLVNYCYNAATNRFIRTKVNLSSSQAIQREKPPQMSHYYLWGSKQLNAAYSTQYGQYTGFVGSPHFHAMCRLLGYQGIAVVMDIILKDIVKPLIQGSLLQFTKTLMIAMPKSCKLPRCEYGSPGVLSYYQAHLTDIVQYPDAKTELFQSFREFGNSIIFCLLIEQALSQEEVCDLLHAALFQNIFPRPFCKENEKPEAKQKRLEAQFANLQIVSNVEKIGTAKQAMIAREGDLLTRERLCCGLSIFEVILNRVKSYLDDPVWCGPPPANGIIHVDECSEFHRLWSALQFVYCIPVRGTEYTIEELFGEGLNWAGCVMIVLLGQQRRFEALDFCYHILRVQRVDGKDEDVKGIQLKRMVDRIRRFQVLNSQIFSILNKYLKGGDGEGSNVEHVRCFPPPQHPSVISSSSHYQDPQKLRQSINN</sequence>
<gene>
    <name evidence="8" type="primary">Cyfip</name>
    <name evidence="11 16" type="synonym">Sra-1</name>
    <name evidence="16" type="ORF">CG4931</name>
</gene>
<reference evidence="12" key="1">
    <citation type="journal article" date="2001" name="Proc. Natl. Acad. Sci. U.S.A.">
        <title>A highly conserved protein family interacting with the fragile X mental retardation protein (FMRP) and displaying selective interactions with FMRP-related proteins FXR1P and FXR2P.</title>
        <authorList>
            <person name="Schenck A."/>
            <person name="Bardoni B."/>
            <person name="Moro A."/>
            <person name="Bagni C."/>
            <person name="Mandel J.-L."/>
        </authorList>
    </citation>
    <scope>NUCLEOTIDE SEQUENCE [MRNA]</scope>
</reference>
<reference evidence="10 13" key="2">
    <citation type="submission" date="2001-04" db="EMBL/GenBank/DDBJ databases">
        <title>DSra-1 is an effector for DRac1 during Drosophila embryogenesis.</title>
        <authorList>
            <person name="Langmann C."/>
            <person name="Harden N."/>
        </authorList>
    </citation>
    <scope>NUCLEOTIDE SEQUENCE [MRNA]</scope>
</reference>
<reference evidence="11" key="3">
    <citation type="journal article" date="2000" name="Science">
        <title>The genome sequence of Drosophila melanogaster.</title>
        <authorList>
            <person name="Adams M.D."/>
            <person name="Celniker S.E."/>
            <person name="Holt R.A."/>
            <person name="Evans C.A."/>
            <person name="Gocayne J.D."/>
            <person name="Amanatides P.G."/>
            <person name="Scherer S.E."/>
            <person name="Li P.W."/>
            <person name="Hoskins R.A."/>
            <person name="Galle R.F."/>
            <person name="George R.A."/>
            <person name="Lewis S.E."/>
            <person name="Richards S."/>
            <person name="Ashburner M."/>
            <person name="Henderson S.N."/>
            <person name="Sutton G.G."/>
            <person name="Wortman J.R."/>
            <person name="Yandell M.D."/>
            <person name="Zhang Q."/>
            <person name="Chen L.X."/>
            <person name="Brandon R.C."/>
            <person name="Rogers Y.-H.C."/>
            <person name="Blazej R.G."/>
            <person name="Champe M."/>
            <person name="Pfeiffer B.D."/>
            <person name="Wan K.H."/>
            <person name="Doyle C."/>
            <person name="Baxter E.G."/>
            <person name="Helt G."/>
            <person name="Nelson C.R."/>
            <person name="Miklos G.L.G."/>
            <person name="Abril J.F."/>
            <person name="Agbayani A."/>
            <person name="An H.-J."/>
            <person name="Andrews-Pfannkoch C."/>
            <person name="Baldwin D."/>
            <person name="Ballew R.M."/>
            <person name="Basu A."/>
            <person name="Baxendale J."/>
            <person name="Bayraktaroglu L."/>
            <person name="Beasley E.M."/>
            <person name="Beeson K.Y."/>
            <person name="Benos P.V."/>
            <person name="Berman B.P."/>
            <person name="Bhandari D."/>
            <person name="Bolshakov S."/>
            <person name="Borkova D."/>
            <person name="Botchan M.R."/>
            <person name="Bouck J."/>
            <person name="Brokstein P."/>
            <person name="Brottier P."/>
            <person name="Burtis K.C."/>
            <person name="Busam D.A."/>
            <person name="Butler H."/>
            <person name="Cadieu E."/>
            <person name="Center A."/>
            <person name="Chandra I."/>
            <person name="Cherry J.M."/>
            <person name="Cawley S."/>
            <person name="Dahlke C."/>
            <person name="Davenport L.B."/>
            <person name="Davies P."/>
            <person name="de Pablos B."/>
            <person name="Delcher A."/>
            <person name="Deng Z."/>
            <person name="Mays A.D."/>
            <person name="Dew I."/>
            <person name="Dietz S.M."/>
            <person name="Dodson K."/>
            <person name="Doup L.E."/>
            <person name="Downes M."/>
            <person name="Dugan-Rocha S."/>
            <person name="Dunkov B.C."/>
            <person name="Dunn P."/>
            <person name="Durbin K.J."/>
            <person name="Evangelista C.C."/>
            <person name="Ferraz C."/>
            <person name="Ferriera S."/>
            <person name="Fleischmann W."/>
            <person name="Fosler C."/>
            <person name="Gabrielian A.E."/>
            <person name="Garg N.S."/>
            <person name="Gelbart W.M."/>
            <person name="Glasser K."/>
            <person name="Glodek A."/>
            <person name="Gong F."/>
            <person name="Gorrell J.H."/>
            <person name="Gu Z."/>
            <person name="Guan P."/>
            <person name="Harris M."/>
            <person name="Harris N.L."/>
            <person name="Harvey D.A."/>
            <person name="Heiman T.J."/>
            <person name="Hernandez J.R."/>
            <person name="Houck J."/>
            <person name="Hostin D."/>
            <person name="Houston K.A."/>
            <person name="Howland T.J."/>
            <person name="Wei M.-H."/>
            <person name="Ibegwam C."/>
            <person name="Jalali M."/>
            <person name="Kalush F."/>
            <person name="Karpen G.H."/>
            <person name="Ke Z."/>
            <person name="Kennison J.A."/>
            <person name="Ketchum K.A."/>
            <person name="Kimmel B.E."/>
            <person name="Kodira C.D."/>
            <person name="Kraft C.L."/>
            <person name="Kravitz S."/>
            <person name="Kulp D."/>
            <person name="Lai Z."/>
            <person name="Lasko P."/>
            <person name="Lei Y."/>
            <person name="Levitsky A.A."/>
            <person name="Li J.H."/>
            <person name="Li Z."/>
            <person name="Liang Y."/>
            <person name="Lin X."/>
            <person name="Liu X."/>
            <person name="Mattei B."/>
            <person name="McIntosh T.C."/>
            <person name="McLeod M.P."/>
            <person name="McPherson D."/>
            <person name="Merkulov G."/>
            <person name="Milshina N.V."/>
            <person name="Mobarry C."/>
            <person name="Morris J."/>
            <person name="Moshrefi A."/>
            <person name="Mount S.M."/>
            <person name="Moy M."/>
            <person name="Murphy B."/>
            <person name="Murphy L."/>
            <person name="Muzny D.M."/>
            <person name="Nelson D.L."/>
            <person name="Nelson D.R."/>
            <person name="Nelson K.A."/>
            <person name="Nixon K."/>
            <person name="Nusskern D.R."/>
            <person name="Pacleb J.M."/>
            <person name="Palazzolo M."/>
            <person name="Pittman G.S."/>
            <person name="Pan S."/>
            <person name="Pollard J."/>
            <person name="Puri V."/>
            <person name="Reese M.G."/>
            <person name="Reinert K."/>
            <person name="Remington K."/>
            <person name="Saunders R.D.C."/>
            <person name="Scheeler F."/>
            <person name="Shen H."/>
            <person name="Shue B.C."/>
            <person name="Siden-Kiamos I."/>
            <person name="Simpson M."/>
            <person name="Skupski M.P."/>
            <person name="Smith T.J."/>
            <person name="Spier E."/>
            <person name="Spradling A.C."/>
            <person name="Stapleton M."/>
            <person name="Strong R."/>
            <person name="Sun E."/>
            <person name="Svirskas R."/>
            <person name="Tector C."/>
            <person name="Turner R."/>
            <person name="Venter E."/>
            <person name="Wang A.H."/>
            <person name="Wang X."/>
            <person name="Wang Z.-Y."/>
            <person name="Wassarman D.A."/>
            <person name="Weinstock G.M."/>
            <person name="Weissenbach J."/>
            <person name="Williams S.M."/>
            <person name="Woodage T."/>
            <person name="Worley K.C."/>
            <person name="Wu D."/>
            <person name="Yang S."/>
            <person name="Yao Q.A."/>
            <person name="Ye J."/>
            <person name="Yeh R.-F."/>
            <person name="Zaveri J.S."/>
            <person name="Zhan M."/>
            <person name="Zhang G."/>
            <person name="Zhao Q."/>
            <person name="Zheng L."/>
            <person name="Zheng X.H."/>
            <person name="Zhong F.N."/>
            <person name="Zhong W."/>
            <person name="Zhou X."/>
            <person name="Zhu S.C."/>
            <person name="Zhu X."/>
            <person name="Smith H.O."/>
            <person name="Gibbs R.A."/>
            <person name="Myers E.W."/>
            <person name="Rubin G.M."/>
            <person name="Venter J.C."/>
        </authorList>
    </citation>
    <scope>NUCLEOTIDE SEQUENCE [LARGE SCALE GENOMIC DNA]</scope>
    <source>
        <strain evidence="11">Berkeley</strain>
    </source>
</reference>
<reference evidence="11" key="4">
    <citation type="journal article" date="2002" name="Genome Biol.">
        <title>Annotation of the Drosophila melanogaster euchromatic genome: a systematic review.</title>
        <authorList>
            <person name="Misra S."/>
            <person name="Crosby M.A."/>
            <person name="Mungall C.J."/>
            <person name="Matthews B.B."/>
            <person name="Campbell K.S."/>
            <person name="Hradecky P."/>
            <person name="Huang Y."/>
            <person name="Kaminker J.S."/>
            <person name="Millburn G.H."/>
            <person name="Prochnik S.E."/>
            <person name="Smith C.D."/>
            <person name="Tupy J.L."/>
            <person name="Whitfield E.J."/>
            <person name="Bayraktaroglu L."/>
            <person name="Berman B.P."/>
            <person name="Bettencourt B.R."/>
            <person name="Celniker S.E."/>
            <person name="de Grey A.D.N.J."/>
            <person name="Drysdale R.A."/>
            <person name="Harris N.L."/>
            <person name="Richter J."/>
            <person name="Russo S."/>
            <person name="Schroeder A.J."/>
            <person name="Shu S.Q."/>
            <person name="Stapleton M."/>
            <person name="Yamada C."/>
            <person name="Ashburner M."/>
            <person name="Gelbart W.M."/>
            <person name="Rubin G.M."/>
            <person name="Lewis S.E."/>
        </authorList>
    </citation>
    <scope>GENOME REANNOTATION</scope>
    <source>
        <strain>Berkeley</strain>
    </source>
</reference>
<reference evidence="10 13" key="5">
    <citation type="submission" date="2003-12" db="EMBL/GenBank/DDBJ databases">
        <authorList>
            <person name="Stapleton M."/>
            <person name="Brokstein P."/>
            <person name="Hong L."/>
            <person name="Agbayani A."/>
            <person name="Carlson J.W."/>
            <person name="Champe M."/>
            <person name="Chavez C."/>
            <person name="Dorsett V."/>
            <person name="Dresnek D."/>
            <person name="Farfan D."/>
            <person name="Frise E."/>
            <person name="George R.A."/>
            <person name="Gonzalez M."/>
            <person name="Guarin H."/>
            <person name="Kronmiller B."/>
            <person name="Li P.W."/>
            <person name="Liao G."/>
            <person name="Miranda A."/>
            <person name="Mungall C.J."/>
            <person name="Nunoo J."/>
            <person name="Pacleb J.M."/>
            <person name="Paragas V."/>
            <person name="Park S."/>
            <person name="Patel S."/>
            <person name="Phouanenavong S."/>
            <person name="Wan K.H."/>
            <person name="Yu C."/>
            <person name="Lewis S.E."/>
            <person name="Rubin G.M."/>
            <person name="Celniker S.E."/>
        </authorList>
    </citation>
    <scope>NUCLEOTIDE SEQUENCE [LARGE SCALE MRNA] OF 1-1152</scope>
    <source>
        <strain evidence="15">Berkeley</strain>
        <tissue evidence="15">Embryo</tissue>
    </source>
</reference>
<reference evidence="10 14" key="6">
    <citation type="journal article" date="2002" name="Genome Biol.">
        <title>A Drosophila full-length cDNA resource.</title>
        <authorList>
            <person name="Stapleton M."/>
            <person name="Carlson J.W."/>
            <person name="Brokstein P."/>
            <person name="Yu C."/>
            <person name="Champe M."/>
            <person name="George R.A."/>
            <person name="Guarin H."/>
            <person name="Kronmiller B."/>
            <person name="Pacleb J.M."/>
            <person name="Park S."/>
            <person name="Wan K.H."/>
            <person name="Rubin G.M."/>
            <person name="Celniker S.E."/>
        </authorList>
    </citation>
    <scope>NUCLEOTIDE SEQUENCE [LARGE SCALE MRNA] OF 156-1291</scope>
    <source>
        <strain evidence="14">Berkeley</strain>
        <tissue evidence="14">Embryo</tissue>
    </source>
</reference>
<reference evidence="10" key="7">
    <citation type="journal article" date="2003" name="Curr. Biol.">
        <title>Abi, Sra1, and Kette control the stability and localization of SCAR/WAVE to regulate the formation of actin-based protrusions.</title>
        <authorList>
            <person name="Kunda P."/>
            <person name="Craig G."/>
            <person name="Dominguez V."/>
            <person name="Baum B."/>
        </authorList>
    </citation>
    <scope>FUNCTION</scope>
    <scope>DISRUPTION PHENOTYPE</scope>
</reference>
<reference evidence="10" key="8">
    <citation type="journal article" date="2003" name="Neuron">
        <title>CYFIP/Sra-1 controls neuronal connectivity in Drosophila and links the Rac1 GTPase pathway to the fragile X protein.</title>
        <authorList>
            <person name="Schenck A."/>
            <person name="Bardoni B."/>
            <person name="Langmann C."/>
            <person name="Harden N."/>
            <person name="Mandel J.-L."/>
            <person name="Giangrande A."/>
        </authorList>
    </citation>
    <scope>FUNCTION</scope>
    <scope>INTERACTION WITH FMR1 AND RAC1</scope>
    <scope>SUBCELLULAR LOCATION</scope>
    <scope>TISSUE SPECIFICITY</scope>
    <scope>DEVELOPMENTAL STAGE</scope>
    <scope>DISRUPTION PHENOTYPE</scope>
</reference>
<reference evidence="10" key="9">
    <citation type="journal article" date="2004" name="Dev. Biol.">
        <title>WAVE/SCAR, a multifunctional complex coordinating different aspects of neuronal connectivity.</title>
        <authorList>
            <person name="Schenck A."/>
            <person name="Qurashi A."/>
            <person name="Carrera P."/>
            <person name="Bardoni B."/>
            <person name="Diebold C."/>
            <person name="Schejter E."/>
            <person name="Mandel J.-L."/>
            <person name="Giangrande A."/>
        </authorList>
    </citation>
    <scope>FUNCTION</scope>
    <scope>COMPONENT OF WAVE COMPLEX</scope>
</reference>
<reference evidence="10" key="10">
    <citation type="journal article" date="2004" name="Development">
        <title>Sra-1 interacts with Kette and Wasp and is required for neuronal and bristle development in Drosophila.</title>
        <authorList>
            <person name="Bogdan S."/>
            <person name="Grewe O."/>
            <person name="Strunk M."/>
            <person name="Mertens A."/>
            <person name="Klaembt C."/>
        </authorList>
    </citation>
    <scope>FUNCTION</scope>
    <scope>INTERACTION WITH HEM</scope>
    <scope>TISSUE SPECIFICITY</scope>
    <scope>DISRUPTION PHENOTYPE</scope>
</reference>
<reference key="11">
    <citation type="journal article" date="2020" name="Cell">
        <title>Aralar Sequesters GABA into Hyperactive Mitochondria, Causing Social Behavior Deficits.</title>
        <authorList>
            <person name="Kanellopoulos A.K."/>
            <person name="Mariano V."/>
            <person name="Spinazzi M."/>
            <person name="Woo Y.J."/>
            <person name="McLean C."/>
            <person name="Pech U."/>
            <person name="Li K.W."/>
            <person name="Armstrong J.D."/>
            <person name="Giangrande A."/>
            <person name="Callaerts P."/>
            <person name="Smit A.B."/>
            <person name="Abrahams B.S."/>
            <person name="Fiala A."/>
            <person name="Achsel T."/>
            <person name="Bagni C."/>
        </authorList>
    </citation>
    <scope>FUNCTION</scope>
    <scope>DISRUPTION PHENOTYPE</scope>
</reference>
<dbReference type="EMBL" id="AY017343">
    <property type="protein sequence ID" value="AAG61254.1"/>
    <property type="molecule type" value="mRNA"/>
</dbReference>
<dbReference type="EMBL" id="AY029211">
    <property type="protein sequence ID" value="AAK31584.1"/>
    <property type="molecule type" value="mRNA"/>
</dbReference>
<dbReference type="EMBL" id="AE014297">
    <property type="protein sequence ID" value="AAF55173.1"/>
    <property type="molecule type" value="Genomic_DNA"/>
</dbReference>
<dbReference type="EMBL" id="BT011115">
    <property type="protein sequence ID" value="AAR82782.1"/>
    <property type="molecule type" value="mRNA"/>
</dbReference>
<dbReference type="EMBL" id="AY122203">
    <property type="protein sequence ID" value="AAM52715.1"/>
    <property type="status" value="ALT_INIT"/>
    <property type="molecule type" value="mRNA"/>
</dbReference>
<dbReference type="RefSeq" id="NP_650447.1">
    <property type="nucleotide sequence ID" value="NM_142190.3"/>
</dbReference>
<dbReference type="SMR" id="Q9VF87"/>
<dbReference type="BioGRID" id="66924">
    <property type="interactions" value="12"/>
</dbReference>
<dbReference type="ComplexPortal" id="CPX-2972">
    <property type="entry name" value="WAVE regulatory complex"/>
</dbReference>
<dbReference type="DIP" id="DIP-33370N"/>
<dbReference type="FunCoup" id="Q9VF87">
    <property type="interactions" value="1604"/>
</dbReference>
<dbReference type="IntAct" id="Q9VF87">
    <property type="interactions" value="8"/>
</dbReference>
<dbReference type="MINT" id="Q9VF87"/>
<dbReference type="STRING" id="7227.FBpp0082541"/>
<dbReference type="PaxDb" id="7227-FBpp0082541"/>
<dbReference type="EnsemblMetazoa" id="FBtr0083085">
    <property type="protein sequence ID" value="FBpp0082541"/>
    <property type="gene ID" value="FBgn0038320"/>
</dbReference>
<dbReference type="GeneID" id="41861"/>
<dbReference type="KEGG" id="dme:Dmel_CG4931"/>
<dbReference type="AGR" id="FB:FBgn0038320"/>
<dbReference type="CTD" id="41861"/>
<dbReference type="FlyBase" id="FBgn0038320">
    <property type="gene designation" value="Cyfip"/>
</dbReference>
<dbReference type="VEuPathDB" id="VectorBase:FBgn0038320"/>
<dbReference type="eggNOG" id="KOG3534">
    <property type="taxonomic scope" value="Eukaryota"/>
</dbReference>
<dbReference type="HOGENOM" id="CLU_002688_2_1_1"/>
<dbReference type="InParanoid" id="Q9VF87"/>
<dbReference type="OMA" id="DQPNRVE"/>
<dbReference type="OrthoDB" id="10265867at2759"/>
<dbReference type="PhylomeDB" id="Q9VF87"/>
<dbReference type="Reactome" id="R-DME-2029482">
    <property type="pathway name" value="Regulation of actin dynamics for phagocytic cup formation"/>
</dbReference>
<dbReference type="Reactome" id="R-DME-4420097">
    <property type="pathway name" value="VEGFA-VEGFR2 Pathway"/>
</dbReference>
<dbReference type="Reactome" id="R-DME-5663213">
    <property type="pathway name" value="RHO GTPases Activate WASPs and WAVEs"/>
</dbReference>
<dbReference type="Reactome" id="R-DME-6798695">
    <property type="pathway name" value="Neutrophil degranulation"/>
</dbReference>
<dbReference type="Reactome" id="R-DME-9013149">
    <property type="pathway name" value="RAC1 GTPase cycle"/>
</dbReference>
<dbReference type="Reactome" id="R-DME-9013404">
    <property type="pathway name" value="RAC2 GTPase cycle"/>
</dbReference>
<dbReference type="Reactome" id="R-DME-9013408">
    <property type="pathway name" value="RHOG GTPase cycle"/>
</dbReference>
<dbReference type="Reactome" id="R-DME-9013423">
    <property type="pathway name" value="RAC3 GTPase cycle"/>
</dbReference>
<dbReference type="SignaLink" id="Q9VF87"/>
<dbReference type="BioGRID-ORCS" id="41861">
    <property type="hits" value="0 hits in 3 CRISPR screens"/>
</dbReference>
<dbReference type="GenomeRNAi" id="41861"/>
<dbReference type="PRO" id="PR:Q9VF87"/>
<dbReference type="Proteomes" id="UP000000803">
    <property type="component" value="Chromosome 3R"/>
</dbReference>
<dbReference type="Bgee" id="FBgn0038320">
    <property type="expression patterns" value="Expressed in embryonic/larval hemocyte (Drosophila) and 68 other cell types or tissues"/>
</dbReference>
<dbReference type="ExpressionAtlas" id="Q9VF87">
    <property type="expression patterns" value="baseline and differential"/>
</dbReference>
<dbReference type="GO" id="GO:0045177">
    <property type="term" value="C:apical part of cell"/>
    <property type="evidence" value="ECO:0000314"/>
    <property type="project" value="FlyBase"/>
</dbReference>
<dbReference type="GO" id="GO:0005737">
    <property type="term" value="C:cytoplasm"/>
    <property type="evidence" value="ECO:0000314"/>
    <property type="project" value="FlyBase"/>
</dbReference>
<dbReference type="GO" id="GO:0043005">
    <property type="term" value="C:neuron projection"/>
    <property type="evidence" value="ECO:0000318"/>
    <property type="project" value="GO_Central"/>
</dbReference>
<dbReference type="GO" id="GO:0031209">
    <property type="term" value="C:SCAR complex"/>
    <property type="evidence" value="ECO:0000314"/>
    <property type="project" value="UniProtKB"/>
</dbReference>
<dbReference type="GO" id="GO:0045202">
    <property type="term" value="C:synapse"/>
    <property type="evidence" value="ECO:0000250"/>
    <property type="project" value="FlyBase"/>
</dbReference>
<dbReference type="GO" id="GO:0000340">
    <property type="term" value="F:RNA 7-methylguanosine cap binding"/>
    <property type="evidence" value="ECO:0000318"/>
    <property type="project" value="GO_Central"/>
</dbReference>
<dbReference type="GO" id="GO:0031267">
    <property type="term" value="F:small GTPase binding"/>
    <property type="evidence" value="ECO:0007669"/>
    <property type="project" value="InterPro"/>
</dbReference>
<dbReference type="GO" id="GO:0007411">
    <property type="term" value="P:axon guidance"/>
    <property type="evidence" value="ECO:0000315"/>
    <property type="project" value="FlyBase"/>
</dbReference>
<dbReference type="GO" id="GO:0033627">
    <property type="term" value="P:cell adhesion mediated by integrin"/>
    <property type="evidence" value="ECO:0000315"/>
    <property type="project" value="FlyBase"/>
</dbReference>
<dbReference type="GO" id="GO:0000902">
    <property type="term" value="P:cell morphogenesis"/>
    <property type="evidence" value="ECO:0000318"/>
    <property type="project" value="GO_Central"/>
</dbReference>
<dbReference type="GO" id="GO:0030031">
    <property type="term" value="P:cell projection assembly"/>
    <property type="evidence" value="ECO:0000315"/>
    <property type="project" value="FlyBase"/>
</dbReference>
<dbReference type="GO" id="GO:0060269">
    <property type="term" value="P:centripetally migrating follicle cell migration"/>
    <property type="evidence" value="ECO:0000315"/>
    <property type="project" value="FlyBase"/>
</dbReference>
<dbReference type="GO" id="GO:0022416">
    <property type="term" value="P:chaeta development"/>
    <property type="evidence" value="ECO:0000315"/>
    <property type="project" value="UniProtKB"/>
</dbReference>
<dbReference type="GO" id="GO:0001745">
    <property type="term" value="P:compound eye morphogenesis"/>
    <property type="evidence" value="ECO:0000315"/>
    <property type="project" value="FlyBase"/>
</dbReference>
<dbReference type="GO" id="GO:0030866">
    <property type="term" value="P:cortical actin cytoskeleton organization"/>
    <property type="evidence" value="ECO:0000315"/>
    <property type="project" value="FlyBase"/>
</dbReference>
<dbReference type="GO" id="GO:0051491">
    <property type="term" value="P:positive regulation of filopodium assembly"/>
    <property type="evidence" value="ECO:0000315"/>
    <property type="project" value="FlyBase"/>
</dbReference>
<dbReference type="GO" id="GO:0030833">
    <property type="term" value="P:regulation of actin filament polymerization"/>
    <property type="evidence" value="ECO:0007669"/>
    <property type="project" value="InterPro"/>
</dbReference>
<dbReference type="GO" id="GO:0034315">
    <property type="term" value="P:regulation of Arp2/3 complex-mediated actin nucleation"/>
    <property type="evidence" value="ECO:0000314"/>
    <property type="project" value="ComplexPortal"/>
</dbReference>
<dbReference type="GO" id="GO:0008360">
    <property type="term" value="P:regulation of cell shape"/>
    <property type="evidence" value="ECO:0000315"/>
    <property type="project" value="FlyBase"/>
</dbReference>
<dbReference type="GO" id="GO:0050807">
    <property type="term" value="P:regulation of synapse organization"/>
    <property type="evidence" value="ECO:0000315"/>
    <property type="project" value="FlyBase"/>
</dbReference>
<dbReference type="GO" id="GO:0006417">
    <property type="term" value="P:regulation of translation"/>
    <property type="evidence" value="ECO:0000318"/>
    <property type="project" value="GO_Central"/>
</dbReference>
<dbReference type="InterPro" id="IPR009828">
    <property type="entry name" value="CYRIA/CYRIB_Rac1-bd"/>
</dbReference>
<dbReference type="InterPro" id="IPR008081">
    <property type="entry name" value="Cytoplasmic_FMR1-int"/>
</dbReference>
<dbReference type="PANTHER" id="PTHR12195">
    <property type="entry name" value="CYTOPLASMIC FMR1-INTERACTING PROTEIN-RELATED"/>
    <property type="match status" value="1"/>
</dbReference>
<dbReference type="Pfam" id="PF07159">
    <property type="entry name" value="CYRIA-B_Rac1-bd"/>
    <property type="match status" value="1"/>
</dbReference>
<dbReference type="Pfam" id="PF05994">
    <property type="entry name" value="FragX_IP"/>
    <property type="match status" value="1"/>
</dbReference>
<dbReference type="PIRSF" id="PIRSF008153">
    <property type="entry name" value="FMR1_interacting"/>
    <property type="match status" value="1"/>
</dbReference>
<dbReference type="PRINTS" id="PR01698">
    <property type="entry name" value="CYTOFMRPINTP"/>
</dbReference>
<accession>Q9VF87</accession>
<accession>Q6NP16</accession>
<accession>Q8MR06</accession>
<proteinExistence type="evidence at protein level"/>
<feature type="chain" id="PRO_0000279714" description="Cytoplasmic FMR1-interacting protein">
    <location>
        <begin position="1"/>
        <end position="1291"/>
    </location>
</feature>
<feature type="region of interest" description="Disordered" evidence="2">
    <location>
        <begin position="1270"/>
        <end position="1291"/>
    </location>
</feature>
<feature type="compositionally biased region" description="Polar residues" evidence="2">
    <location>
        <begin position="1271"/>
        <end position="1291"/>
    </location>
</feature>
<organism>
    <name type="scientific">Drosophila melanogaster</name>
    <name type="common">Fruit fly</name>
    <dbReference type="NCBI Taxonomy" id="7227"/>
    <lineage>
        <taxon>Eukaryota</taxon>
        <taxon>Metazoa</taxon>
        <taxon>Ecdysozoa</taxon>
        <taxon>Arthropoda</taxon>
        <taxon>Hexapoda</taxon>
        <taxon>Insecta</taxon>
        <taxon>Pterygota</taxon>
        <taxon>Neoptera</taxon>
        <taxon>Endopterygota</taxon>
        <taxon>Diptera</taxon>
        <taxon>Brachycera</taxon>
        <taxon>Muscomorpha</taxon>
        <taxon>Ephydroidea</taxon>
        <taxon>Drosophilidae</taxon>
        <taxon>Drosophila</taxon>
        <taxon>Sophophora</taxon>
    </lineage>
</organism>
<keyword id="KW-0133">Cell shape</keyword>
<keyword id="KW-0963">Cytoplasm</keyword>
<keyword id="KW-0217">Developmental protein</keyword>
<keyword id="KW-0221">Differentiation</keyword>
<keyword id="KW-0524">Neurogenesis</keyword>
<keyword id="KW-1185">Reference proteome</keyword>
<comment type="function">
    <text evidence="3 4 5 6 7">Plays a role in guidance and morphology of central and peripheral axons and in synaptic morphology. Also required for formation of cell membrane protrusions and for bristle development (PubMed:12818175, PubMed:14588242, PubMed:15269173, PubMed:15385157). Plays a role in regulating mitochondrial activity, energy metabolism and membrane potential which maintains normal gamma-aminobutyric acid (GABA) signaling and ensures normal social behavior (PubMed:32200800).</text>
</comment>
<comment type="subunit">
    <text evidence="3 5 6">Interacts with Fmr1 and Rac1. Component of the WAVE complex composed of Hem/Kette, Scar/Wave and Cyfip where it binds through its C-terminus directly to Hem.</text>
</comment>
<comment type="interaction">
    <interactant intactId="EBI-116862">
        <id>Q9VF87</id>
    </interactant>
    <interactant intactId="EBI-603430">
        <id>Q24150</id>
        <label>Nap1</label>
    </interactant>
    <organismsDiffer>false</organismsDiffer>
    <experiments>2</experiments>
</comment>
<comment type="subcellular location">
    <subcellularLocation>
        <location evidence="3">Cytoplasm</location>
    </subcellularLocation>
    <text evidence="3">Accumulates in central axons and motor neuron terminals.</text>
</comment>
<comment type="tissue specificity">
    <text evidence="3 5">In the embryo, expressed mainly in the gut and in the developing central nervous system where high levels of expression are found in the CNS neuropile. Expression in the gut diminishes as development proceeds (at protein level). In the adult, expressed specifically in the nervous system.</text>
</comment>
<comment type="developmental stage">
    <text evidence="3">Expressed throughout the life cycle with no major peaks of expression. In the embryo, uniquitously and highly expressed at precellular and cellular blastoderm stages.</text>
</comment>
<comment type="disruption phenotype">
    <text evidence="3 4 5 7">Flies display pupal lethality with defects in axon growth, branching and pathfinding, synaptic length and organization of the neuromuscular junction. They also display defects in cell morphology with cells exhibiting a starfish-like shape with multiple slender cell extensions and loss of actin filaments at the cell periphery (PubMed:12818175, PubMed:14588242, PubMed:15269173). RNAi-mediated knockdown in gamma-aminobutyric acid (GABA)ergic neurons, or specifically in the anterior paired lateral (APL) neurons or in the antennal lobe local interneurons (LNs), results in feeding-dependent socialization defects (PubMed:32200800).</text>
</comment>
<comment type="similarity">
    <text evidence="1">Belongs to the CYFIP family.</text>
</comment>
<comment type="sequence caution" evidence="10">
    <conflict type="erroneous initiation">
        <sequence resource="EMBL-CDS" id="AAM52715"/>
    </conflict>
</comment>
<evidence type="ECO:0000255" key="1"/>
<evidence type="ECO:0000256" key="2">
    <source>
        <dbReference type="SAM" id="MobiDB-lite"/>
    </source>
</evidence>
<evidence type="ECO:0000269" key="3">
    <source>
    </source>
</evidence>
<evidence type="ECO:0000269" key="4">
    <source>
    </source>
</evidence>
<evidence type="ECO:0000269" key="5">
    <source>
    </source>
</evidence>
<evidence type="ECO:0000269" key="6">
    <source>
    </source>
</evidence>
<evidence type="ECO:0000269" key="7">
    <source>
    </source>
</evidence>
<evidence type="ECO:0000303" key="8">
    <source>
    </source>
</evidence>
<evidence type="ECO:0000303" key="9">
    <source ref="2"/>
</evidence>
<evidence type="ECO:0000305" key="10"/>
<evidence type="ECO:0000312" key="11">
    <source>
        <dbReference type="EMBL" id="AAF55173.1"/>
    </source>
</evidence>
<evidence type="ECO:0000312" key="12">
    <source>
        <dbReference type="EMBL" id="AAG61254.1"/>
    </source>
</evidence>
<evidence type="ECO:0000312" key="13">
    <source>
        <dbReference type="EMBL" id="AAK31584.1"/>
    </source>
</evidence>
<evidence type="ECO:0000312" key="14">
    <source>
        <dbReference type="EMBL" id="AAM52715.1"/>
    </source>
</evidence>
<evidence type="ECO:0000312" key="15">
    <source>
        <dbReference type="EMBL" id="AAR82782.1"/>
    </source>
</evidence>
<evidence type="ECO:0000312" key="16">
    <source>
        <dbReference type="FlyBase" id="FBgn0038320"/>
    </source>
</evidence>
<protein>
    <recommendedName>
        <fullName evidence="8">Cytoplasmic FMR1-interacting protein</fullName>
    </recommendedName>
    <alternativeName>
        <fullName evidence="9">Specifically Rac1-associated protein 1</fullName>
    </alternativeName>
</protein>
<name>CYFIP_DROME</name>